<protein>
    <recommendedName>
        <fullName evidence="1">2,3,4,5-tetrahydropyridine-2,6-dicarboxylate N-succinyltransferase</fullName>
        <ecNumber evidence="1">2.3.1.117</ecNumber>
    </recommendedName>
    <alternativeName>
        <fullName evidence="1">Tetrahydrodipicolinate N-succinyltransferase</fullName>
        <shortName evidence="1">THDP succinyltransferase</shortName>
        <shortName evidence="1">THP succinyltransferase</shortName>
        <shortName evidence="1">Tetrahydropicolinate succinylase</shortName>
    </alternativeName>
</protein>
<dbReference type="EC" id="2.3.1.117" evidence="1"/>
<dbReference type="EMBL" id="AE008918">
    <property type="protein sequence ID" value="AAL53511.1"/>
    <property type="molecule type" value="Genomic_DNA"/>
</dbReference>
<dbReference type="PIR" id="AD3543">
    <property type="entry name" value="AD3543"/>
</dbReference>
<dbReference type="RefSeq" id="WP_002965622.1">
    <property type="nucleotide sequence ID" value="NZ_GG703779.1"/>
</dbReference>
<dbReference type="SMR" id="Q8YDA8"/>
<dbReference type="GeneID" id="97534922"/>
<dbReference type="KEGG" id="bme:BMEII0270"/>
<dbReference type="KEGG" id="bmel:DK63_2972"/>
<dbReference type="PATRIC" id="fig|224914.52.peg.3118"/>
<dbReference type="eggNOG" id="COG2171">
    <property type="taxonomic scope" value="Bacteria"/>
</dbReference>
<dbReference type="PhylomeDB" id="Q8YDA8"/>
<dbReference type="UniPathway" id="UPA00034">
    <property type="reaction ID" value="UER00019"/>
</dbReference>
<dbReference type="Proteomes" id="UP000000419">
    <property type="component" value="Chromosome II"/>
</dbReference>
<dbReference type="GO" id="GO:0005737">
    <property type="term" value="C:cytoplasm"/>
    <property type="evidence" value="ECO:0007669"/>
    <property type="project" value="UniProtKB-SubCell"/>
</dbReference>
<dbReference type="GO" id="GO:0008666">
    <property type="term" value="F:2,3,4,5-tetrahydropyridine-2,6-dicarboxylate N-succinyltransferase activity"/>
    <property type="evidence" value="ECO:0007669"/>
    <property type="project" value="UniProtKB-UniRule"/>
</dbReference>
<dbReference type="GO" id="GO:0019877">
    <property type="term" value="P:diaminopimelate biosynthetic process"/>
    <property type="evidence" value="ECO:0007669"/>
    <property type="project" value="UniProtKB-UniRule"/>
</dbReference>
<dbReference type="GO" id="GO:0009089">
    <property type="term" value="P:lysine biosynthetic process via diaminopimelate"/>
    <property type="evidence" value="ECO:0007669"/>
    <property type="project" value="UniProtKB-UniRule"/>
</dbReference>
<dbReference type="CDD" id="cd03350">
    <property type="entry name" value="LbH_THP_succinylT"/>
    <property type="match status" value="1"/>
</dbReference>
<dbReference type="Gene3D" id="2.160.10.10">
    <property type="entry name" value="Hexapeptide repeat proteins"/>
    <property type="match status" value="1"/>
</dbReference>
<dbReference type="Gene3D" id="1.10.166.10">
    <property type="entry name" value="Tetrahydrodipicolinate-N-succinyltransferase, N-terminal domain"/>
    <property type="match status" value="1"/>
</dbReference>
<dbReference type="HAMAP" id="MF_00811">
    <property type="entry name" value="DapD"/>
    <property type="match status" value="1"/>
</dbReference>
<dbReference type="InterPro" id="IPR005664">
    <property type="entry name" value="DapD_Trfase_Hexpep_rpt_fam"/>
</dbReference>
<dbReference type="InterPro" id="IPR001451">
    <property type="entry name" value="Hexapep"/>
</dbReference>
<dbReference type="InterPro" id="IPR018357">
    <property type="entry name" value="Hexapep_transf_CS"/>
</dbReference>
<dbReference type="InterPro" id="IPR023180">
    <property type="entry name" value="THP_succinylTrfase_dom1"/>
</dbReference>
<dbReference type="InterPro" id="IPR037133">
    <property type="entry name" value="THP_succinylTrfase_N_sf"/>
</dbReference>
<dbReference type="InterPro" id="IPR050179">
    <property type="entry name" value="Trans_hexapeptide_repeat"/>
</dbReference>
<dbReference type="InterPro" id="IPR011004">
    <property type="entry name" value="Trimer_LpxA-like_sf"/>
</dbReference>
<dbReference type="NCBIfam" id="TIGR00965">
    <property type="entry name" value="dapD"/>
    <property type="match status" value="1"/>
</dbReference>
<dbReference type="NCBIfam" id="NF008808">
    <property type="entry name" value="PRK11830.1"/>
    <property type="match status" value="1"/>
</dbReference>
<dbReference type="PANTHER" id="PTHR43300:SF10">
    <property type="entry name" value="2,3,4,5-TETRAHYDROPYRIDINE-2,6-DICARBOXYLATE N-ACETYLTRANSFERASE"/>
    <property type="match status" value="1"/>
</dbReference>
<dbReference type="PANTHER" id="PTHR43300">
    <property type="entry name" value="ACETYLTRANSFERASE"/>
    <property type="match status" value="1"/>
</dbReference>
<dbReference type="Pfam" id="PF14602">
    <property type="entry name" value="Hexapep_2"/>
    <property type="match status" value="1"/>
</dbReference>
<dbReference type="Pfam" id="PF14805">
    <property type="entry name" value="THDPS_N_2"/>
    <property type="match status" value="1"/>
</dbReference>
<dbReference type="SUPFAM" id="SSF51161">
    <property type="entry name" value="Trimeric LpxA-like enzymes"/>
    <property type="match status" value="1"/>
</dbReference>
<dbReference type="PROSITE" id="PS00101">
    <property type="entry name" value="HEXAPEP_TRANSFERASES"/>
    <property type="match status" value="1"/>
</dbReference>
<sequence length="284" mass="30753">MTKPDLASLEKTIEKAFDERDGINTATRGEVREAVEQSLILLDRGEVRVAEKQADGNWHVNQWLKKAVLLSFRLNPMEVIKGGPGQSSWWDKVPSKFDGWTANEFEKAGFRAVPNCIVRHSAYIAPNAILMPSFVNLGAYVDKGAMIDTWATVGSCAQIGKNVHLSGGVGIGGVLEPMQAGPTIIEDNCFIGARSEVVEGCIVREGSVLGMGVFIGKSTKIVDRATGEVFYGEVPPYSVVVAGTMPGKNVPGENWGPSLYCAVIVKRADEKTRSKTSINELLRD</sequence>
<reference key="1">
    <citation type="journal article" date="2002" name="Proc. Natl. Acad. Sci. U.S.A.">
        <title>The genome sequence of the facultative intracellular pathogen Brucella melitensis.</title>
        <authorList>
            <person name="DelVecchio V.G."/>
            <person name="Kapatral V."/>
            <person name="Redkar R.J."/>
            <person name="Patra G."/>
            <person name="Mujer C."/>
            <person name="Los T."/>
            <person name="Ivanova N."/>
            <person name="Anderson I."/>
            <person name="Bhattacharyya A."/>
            <person name="Lykidis A."/>
            <person name="Reznik G."/>
            <person name="Jablonski L."/>
            <person name="Larsen N."/>
            <person name="D'Souza M."/>
            <person name="Bernal A."/>
            <person name="Mazur M."/>
            <person name="Goltsman E."/>
            <person name="Selkov E."/>
            <person name="Elzer P.H."/>
            <person name="Hagius S."/>
            <person name="O'Callaghan D."/>
            <person name="Letesson J.-J."/>
            <person name="Haselkorn R."/>
            <person name="Kyrpides N.C."/>
            <person name="Overbeek R."/>
        </authorList>
    </citation>
    <scope>NUCLEOTIDE SEQUENCE [LARGE SCALE GENOMIC DNA]</scope>
    <source>
        <strain>ATCC 23456 / CCUG 17765 / NCTC 10094 / 16M</strain>
    </source>
</reference>
<accession>Q8YDA8</accession>
<proteinExistence type="inferred from homology"/>
<name>DAPD_BRUME</name>
<organism>
    <name type="scientific">Brucella melitensis biotype 1 (strain ATCC 23456 / CCUG 17765 / NCTC 10094 / 16M)</name>
    <dbReference type="NCBI Taxonomy" id="224914"/>
    <lineage>
        <taxon>Bacteria</taxon>
        <taxon>Pseudomonadati</taxon>
        <taxon>Pseudomonadota</taxon>
        <taxon>Alphaproteobacteria</taxon>
        <taxon>Hyphomicrobiales</taxon>
        <taxon>Brucellaceae</taxon>
        <taxon>Brucella/Ochrobactrum group</taxon>
        <taxon>Brucella</taxon>
    </lineage>
</organism>
<feature type="chain" id="PRO_0000196921" description="2,3,4,5-tetrahydropyridine-2,6-dicarboxylate N-succinyltransferase">
    <location>
        <begin position="1"/>
        <end position="284"/>
    </location>
</feature>
<feature type="binding site" evidence="1">
    <location>
        <position position="111"/>
    </location>
    <ligand>
        <name>substrate</name>
    </ligand>
</feature>
<feature type="binding site" evidence="1">
    <location>
        <position position="148"/>
    </location>
    <ligand>
        <name>substrate</name>
    </ligand>
</feature>
<evidence type="ECO:0000255" key="1">
    <source>
        <dbReference type="HAMAP-Rule" id="MF_00811"/>
    </source>
</evidence>
<keyword id="KW-0012">Acyltransferase</keyword>
<keyword id="KW-0028">Amino-acid biosynthesis</keyword>
<keyword id="KW-0963">Cytoplasm</keyword>
<keyword id="KW-0220">Diaminopimelate biosynthesis</keyword>
<keyword id="KW-0457">Lysine biosynthesis</keyword>
<keyword id="KW-0677">Repeat</keyword>
<keyword id="KW-0808">Transferase</keyword>
<gene>
    <name evidence="1" type="primary">dapD</name>
    <name type="ordered locus">BMEII0270</name>
</gene>
<comment type="catalytic activity">
    <reaction evidence="1">
        <text>(S)-2,3,4,5-tetrahydrodipicolinate + succinyl-CoA + H2O = (S)-2-succinylamino-6-oxoheptanedioate + CoA</text>
        <dbReference type="Rhea" id="RHEA:17325"/>
        <dbReference type="ChEBI" id="CHEBI:15377"/>
        <dbReference type="ChEBI" id="CHEBI:15685"/>
        <dbReference type="ChEBI" id="CHEBI:16845"/>
        <dbReference type="ChEBI" id="CHEBI:57287"/>
        <dbReference type="ChEBI" id="CHEBI:57292"/>
        <dbReference type="EC" id="2.3.1.117"/>
    </reaction>
</comment>
<comment type="pathway">
    <text evidence="1">Amino-acid biosynthesis; L-lysine biosynthesis via DAP pathway; LL-2,6-diaminopimelate from (S)-tetrahydrodipicolinate (succinylase route): step 1/3.</text>
</comment>
<comment type="subunit">
    <text evidence="1">Homotrimer.</text>
</comment>
<comment type="subcellular location">
    <subcellularLocation>
        <location evidence="1">Cytoplasm</location>
    </subcellularLocation>
</comment>
<comment type="similarity">
    <text evidence="1">Belongs to the transferase hexapeptide repeat family.</text>
</comment>